<protein>
    <recommendedName>
        <fullName>Uncharacterized RNA methyltransferase CA_C0523</fullName>
        <ecNumber>2.1.1.-</ecNumber>
    </recommendedName>
</protein>
<keyword id="KW-0004">4Fe-4S</keyword>
<keyword id="KW-0408">Iron</keyword>
<keyword id="KW-0411">Iron-sulfur</keyword>
<keyword id="KW-0479">Metal-binding</keyword>
<keyword id="KW-0489">Methyltransferase</keyword>
<keyword id="KW-1185">Reference proteome</keyword>
<keyword id="KW-0949">S-adenosyl-L-methionine</keyword>
<keyword id="KW-0808">Transferase</keyword>
<comment type="similarity">
    <text evidence="3">Belongs to the class I-like SAM-binding methyltransferase superfamily. RNA M5U methyltransferase family.</text>
</comment>
<accession>Q97LN4</accession>
<organism>
    <name type="scientific">Clostridium acetobutylicum (strain ATCC 824 / DSM 792 / JCM 1419 / IAM 19013 / LMG 5710 / NBRC 13948 / NRRL B-527 / VKM B-1787 / 2291 / W)</name>
    <dbReference type="NCBI Taxonomy" id="272562"/>
    <lineage>
        <taxon>Bacteria</taxon>
        <taxon>Bacillati</taxon>
        <taxon>Bacillota</taxon>
        <taxon>Clostridia</taxon>
        <taxon>Eubacteriales</taxon>
        <taxon>Clostridiaceae</taxon>
        <taxon>Clostridium</taxon>
    </lineage>
</organism>
<evidence type="ECO:0000250" key="1"/>
<evidence type="ECO:0000255" key="2">
    <source>
        <dbReference type="PROSITE-ProRule" id="PRU00208"/>
    </source>
</evidence>
<evidence type="ECO:0000255" key="3">
    <source>
        <dbReference type="PROSITE-ProRule" id="PRU01024"/>
    </source>
</evidence>
<feature type="chain" id="PRO_0000161968" description="Uncharacterized RNA methyltransferase CA_C0523">
    <location>
        <begin position="1"/>
        <end position="460"/>
    </location>
</feature>
<feature type="domain" description="TRAM" evidence="2">
    <location>
        <begin position="6"/>
        <end position="64"/>
    </location>
</feature>
<feature type="active site" description="Nucleophile" evidence="3">
    <location>
        <position position="415"/>
    </location>
</feature>
<feature type="binding site" evidence="1">
    <location>
        <position position="77"/>
    </location>
    <ligand>
        <name>[4Fe-4S] cluster</name>
        <dbReference type="ChEBI" id="CHEBI:49883"/>
    </ligand>
</feature>
<feature type="binding site" evidence="1">
    <location>
        <position position="83"/>
    </location>
    <ligand>
        <name>[4Fe-4S] cluster</name>
        <dbReference type="ChEBI" id="CHEBI:49883"/>
    </ligand>
</feature>
<feature type="binding site" evidence="1">
    <location>
        <position position="86"/>
    </location>
    <ligand>
        <name>[4Fe-4S] cluster</name>
        <dbReference type="ChEBI" id="CHEBI:49883"/>
    </ligand>
</feature>
<feature type="binding site" evidence="1">
    <location>
        <position position="166"/>
    </location>
    <ligand>
        <name>[4Fe-4S] cluster</name>
        <dbReference type="ChEBI" id="CHEBI:49883"/>
    </ligand>
</feature>
<feature type="binding site" evidence="3">
    <location>
        <position position="290"/>
    </location>
    <ligand>
        <name>S-adenosyl-L-methionine</name>
        <dbReference type="ChEBI" id="CHEBI:59789"/>
    </ligand>
</feature>
<feature type="binding site" evidence="3">
    <location>
        <position position="319"/>
    </location>
    <ligand>
        <name>S-adenosyl-L-methionine</name>
        <dbReference type="ChEBI" id="CHEBI:59789"/>
    </ligand>
</feature>
<feature type="binding site" evidence="3">
    <location>
        <position position="340"/>
    </location>
    <ligand>
        <name>S-adenosyl-L-methionine</name>
        <dbReference type="ChEBI" id="CHEBI:59789"/>
    </ligand>
</feature>
<feature type="binding site" evidence="3">
    <location>
        <position position="388"/>
    </location>
    <ligand>
        <name>S-adenosyl-L-methionine</name>
        <dbReference type="ChEBI" id="CHEBI:59789"/>
    </ligand>
</feature>
<proteinExistence type="inferred from homology"/>
<gene>
    <name type="ordered locus">CA_C0523</name>
</gene>
<name>Y523_CLOAB</name>
<sequence>MEKVIPVKKNNDYEIYIDDFGNMGEGIGKIDNFTVFVKDAVKGEKVRAKIIKVNKSFAIGKLIDIIEKSQDRTEPVCSIYKKCGGCQLQHLKYTEQLEFKKNKVVECLKRIGKLDLSSVRINETIGMEDPYFYRNKVQLPVGETAGEAKIGFYRERSHEIIEVDKCFIQDDSANEIILLIKRWIKEFNIEGYNEYSGKGTLRHIMIRKAFKTGQIMLVLVTNTENVPHKKELIHMITTEIQGIKGIIQNINNKKTNVILGQREITLWGESTIEDYIGEFKFNISSKSFFQVNPIQTEKLYSAALKYAGLTGKEVVFDAYCGTGTISLFLSQNAKKVYGVEIIPEAIENAKINAKQNGIENTEFIVGKSEEEIPKLIEKGIAPEVVVVDPPRKGCEKSLLHSIAEASPKTIVYVSCDPATLSRDLGILSELGYEVNEVQPVDMFPMTGHVETIVLIKRVDK</sequence>
<reference key="1">
    <citation type="journal article" date="2001" name="J. Bacteriol.">
        <title>Genome sequence and comparative analysis of the solvent-producing bacterium Clostridium acetobutylicum.</title>
        <authorList>
            <person name="Noelling J."/>
            <person name="Breton G."/>
            <person name="Omelchenko M.V."/>
            <person name="Makarova K.S."/>
            <person name="Zeng Q."/>
            <person name="Gibson R."/>
            <person name="Lee H.M."/>
            <person name="Dubois J."/>
            <person name="Qiu D."/>
            <person name="Hitti J."/>
            <person name="Wolf Y.I."/>
            <person name="Tatusov R.L."/>
            <person name="Sabathe F."/>
            <person name="Doucette-Stamm L.A."/>
            <person name="Soucaille P."/>
            <person name="Daly M.J."/>
            <person name="Bennett G.N."/>
            <person name="Koonin E.V."/>
            <person name="Smith D.R."/>
        </authorList>
    </citation>
    <scope>NUCLEOTIDE SEQUENCE [LARGE SCALE GENOMIC DNA]</scope>
    <source>
        <strain>ATCC 824 / DSM 792 / JCM 1419 / IAM 19013 / LMG 5710 / NBRC 13948 / NRRL B-527 / VKM B-1787 / 2291 / W</strain>
    </source>
</reference>
<dbReference type="EC" id="2.1.1.-"/>
<dbReference type="EMBL" id="AE001437">
    <property type="protein sequence ID" value="AAK78502.1"/>
    <property type="molecule type" value="Genomic_DNA"/>
</dbReference>
<dbReference type="PIR" id="C96964">
    <property type="entry name" value="C96964"/>
</dbReference>
<dbReference type="RefSeq" id="NP_347162.1">
    <property type="nucleotide sequence ID" value="NC_003030.1"/>
</dbReference>
<dbReference type="SMR" id="Q97LN4"/>
<dbReference type="STRING" id="272562.CA_C0523"/>
<dbReference type="KEGG" id="cac:CA_C0523"/>
<dbReference type="PATRIC" id="fig|272562.8.peg.722"/>
<dbReference type="eggNOG" id="COG2265">
    <property type="taxonomic scope" value="Bacteria"/>
</dbReference>
<dbReference type="HOGENOM" id="CLU_014689_7_0_9"/>
<dbReference type="OrthoDB" id="9804590at2"/>
<dbReference type="Proteomes" id="UP000000814">
    <property type="component" value="Chromosome"/>
</dbReference>
<dbReference type="GO" id="GO:0051539">
    <property type="term" value="F:4 iron, 4 sulfur cluster binding"/>
    <property type="evidence" value="ECO:0007669"/>
    <property type="project" value="UniProtKB-KW"/>
</dbReference>
<dbReference type="GO" id="GO:0046872">
    <property type="term" value="F:metal ion binding"/>
    <property type="evidence" value="ECO:0007669"/>
    <property type="project" value="UniProtKB-KW"/>
</dbReference>
<dbReference type="GO" id="GO:0070041">
    <property type="term" value="F:rRNA (uridine-C5-)-methyltransferase activity"/>
    <property type="evidence" value="ECO:0007669"/>
    <property type="project" value="TreeGrafter"/>
</dbReference>
<dbReference type="GO" id="GO:0070475">
    <property type="term" value="P:rRNA base methylation"/>
    <property type="evidence" value="ECO:0007669"/>
    <property type="project" value="TreeGrafter"/>
</dbReference>
<dbReference type="CDD" id="cd02440">
    <property type="entry name" value="AdoMet_MTases"/>
    <property type="match status" value="1"/>
</dbReference>
<dbReference type="FunFam" id="3.40.50.150:FF:000009">
    <property type="entry name" value="23S rRNA (Uracil(1939)-C(5))-methyltransferase RlmD"/>
    <property type="match status" value="1"/>
</dbReference>
<dbReference type="FunFam" id="2.40.50.140:FF:000097">
    <property type="entry name" value="23S rRNA (uracil(1939)-C(5))-methyltransferase RlmD"/>
    <property type="match status" value="1"/>
</dbReference>
<dbReference type="FunFam" id="2.40.50.1070:FF:000003">
    <property type="entry name" value="23S rRNA (Uracil-5-)-methyltransferase RumA"/>
    <property type="match status" value="1"/>
</dbReference>
<dbReference type="Gene3D" id="2.40.50.1070">
    <property type="match status" value="1"/>
</dbReference>
<dbReference type="Gene3D" id="2.40.50.140">
    <property type="entry name" value="Nucleic acid-binding proteins"/>
    <property type="match status" value="1"/>
</dbReference>
<dbReference type="Gene3D" id="3.40.50.150">
    <property type="entry name" value="Vaccinia Virus protein VP39"/>
    <property type="match status" value="1"/>
</dbReference>
<dbReference type="InterPro" id="IPR030390">
    <property type="entry name" value="MeTrfase_TrmA_AS"/>
</dbReference>
<dbReference type="InterPro" id="IPR030391">
    <property type="entry name" value="MeTrfase_TrmA_CS"/>
</dbReference>
<dbReference type="InterPro" id="IPR012340">
    <property type="entry name" value="NA-bd_OB-fold"/>
</dbReference>
<dbReference type="InterPro" id="IPR029063">
    <property type="entry name" value="SAM-dependent_MTases_sf"/>
</dbReference>
<dbReference type="InterPro" id="IPR002792">
    <property type="entry name" value="TRAM_dom"/>
</dbReference>
<dbReference type="InterPro" id="IPR010280">
    <property type="entry name" value="U5_MeTrfase_fam"/>
</dbReference>
<dbReference type="NCBIfam" id="TIGR00479">
    <property type="entry name" value="rumA"/>
    <property type="match status" value="1"/>
</dbReference>
<dbReference type="PANTHER" id="PTHR11061">
    <property type="entry name" value="RNA M5U METHYLTRANSFERASE"/>
    <property type="match status" value="1"/>
</dbReference>
<dbReference type="PANTHER" id="PTHR11061:SF30">
    <property type="entry name" value="TRNA (URACIL(54)-C(5))-METHYLTRANSFERASE"/>
    <property type="match status" value="1"/>
</dbReference>
<dbReference type="Pfam" id="PF01938">
    <property type="entry name" value="TRAM"/>
    <property type="match status" value="1"/>
</dbReference>
<dbReference type="Pfam" id="PF05958">
    <property type="entry name" value="tRNA_U5-meth_tr"/>
    <property type="match status" value="1"/>
</dbReference>
<dbReference type="SUPFAM" id="SSF50249">
    <property type="entry name" value="Nucleic acid-binding proteins"/>
    <property type="match status" value="1"/>
</dbReference>
<dbReference type="SUPFAM" id="SSF53335">
    <property type="entry name" value="S-adenosyl-L-methionine-dependent methyltransferases"/>
    <property type="match status" value="1"/>
</dbReference>
<dbReference type="PROSITE" id="PS51687">
    <property type="entry name" value="SAM_MT_RNA_M5U"/>
    <property type="match status" value="1"/>
</dbReference>
<dbReference type="PROSITE" id="PS50926">
    <property type="entry name" value="TRAM"/>
    <property type="match status" value="1"/>
</dbReference>
<dbReference type="PROSITE" id="PS01230">
    <property type="entry name" value="TRMA_1"/>
    <property type="match status" value="1"/>
</dbReference>
<dbReference type="PROSITE" id="PS01231">
    <property type="entry name" value="TRMA_2"/>
    <property type="match status" value="1"/>
</dbReference>